<comment type="function">
    <text evidence="1">Forms part of the ribosomal stalk which helps the ribosome interact with GTP-bound translation factors.</text>
</comment>
<comment type="subunit">
    <text evidence="1">Part of the ribosomal stalk of the 50S ribosomal subunit. Interacts with L10 and the large rRNA to form the base of the stalk. L10 forms an elongated spine to which L12 dimers bind in a sequential fashion forming a multimeric L10(L12)X complex.</text>
</comment>
<comment type="PTM">
    <text evidence="1">One or more lysine residues are methylated.</text>
</comment>
<comment type="similarity">
    <text evidence="1">Belongs to the universal ribosomal protein uL11 family.</text>
</comment>
<keyword id="KW-0488">Methylation</keyword>
<keyword id="KW-1185">Reference proteome</keyword>
<keyword id="KW-0687">Ribonucleoprotein</keyword>
<keyword id="KW-0689">Ribosomal protein</keyword>
<keyword id="KW-0694">RNA-binding</keyword>
<keyword id="KW-0699">rRNA-binding</keyword>
<gene>
    <name evidence="1" type="primary">rplK</name>
    <name evidence="1" type="synonym">rpl11</name>
    <name type="ordered locus">UU541</name>
</gene>
<organism>
    <name type="scientific">Ureaplasma parvum serovar 3 (strain ATCC 700970)</name>
    <dbReference type="NCBI Taxonomy" id="273119"/>
    <lineage>
        <taxon>Bacteria</taxon>
        <taxon>Bacillati</taxon>
        <taxon>Mycoplasmatota</taxon>
        <taxon>Mycoplasmoidales</taxon>
        <taxon>Mycoplasmoidaceae</taxon>
        <taxon>Ureaplasma</taxon>
    </lineage>
</organism>
<name>RL11_UREPA</name>
<feature type="chain" id="PRO_0000104406" description="Large ribosomal subunit protein uL11">
    <location>
        <begin position="1"/>
        <end position="150"/>
    </location>
</feature>
<accession>Q9PPU9</accession>
<dbReference type="EMBL" id="AF222894">
    <property type="protein sequence ID" value="AAF30954.1"/>
    <property type="molecule type" value="Genomic_DNA"/>
</dbReference>
<dbReference type="SMR" id="Q9PPU9"/>
<dbReference type="STRING" id="273119.UU541"/>
<dbReference type="EnsemblBacteria" id="AAF30954">
    <property type="protein sequence ID" value="AAF30954"/>
    <property type="gene ID" value="UU541"/>
</dbReference>
<dbReference type="KEGG" id="uur:UU541"/>
<dbReference type="PATRIC" id="fig|273119.6.peg.561"/>
<dbReference type="eggNOG" id="COG0080">
    <property type="taxonomic scope" value="Bacteria"/>
</dbReference>
<dbReference type="HOGENOM" id="CLU_074237_2_2_14"/>
<dbReference type="OrthoDB" id="9802408at2"/>
<dbReference type="Proteomes" id="UP000000423">
    <property type="component" value="Chromosome"/>
</dbReference>
<dbReference type="GO" id="GO:0022625">
    <property type="term" value="C:cytosolic large ribosomal subunit"/>
    <property type="evidence" value="ECO:0007669"/>
    <property type="project" value="TreeGrafter"/>
</dbReference>
<dbReference type="GO" id="GO:0070180">
    <property type="term" value="F:large ribosomal subunit rRNA binding"/>
    <property type="evidence" value="ECO:0007669"/>
    <property type="project" value="UniProtKB-UniRule"/>
</dbReference>
<dbReference type="GO" id="GO:0003735">
    <property type="term" value="F:structural constituent of ribosome"/>
    <property type="evidence" value="ECO:0007669"/>
    <property type="project" value="InterPro"/>
</dbReference>
<dbReference type="GO" id="GO:0006412">
    <property type="term" value="P:translation"/>
    <property type="evidence" value="ECO:0007669"/>
    <property type="project" value="UniProtKB-UniRule"/>
</dbReference>
<dbReference type="CDD" id="cd00349">
    <property type="entry name" value="Ribosomal_L11"/>
    <property type="match status" value="1"/>
</dbReference>
<dbReference type="FunFam" id="3.30.1550.10:FF:000006">
    <property type="entry name" value="50S ribosomal protein L11"/>
    <property type="match status" value="1"/>
</dbReference>
<dbReference type="Gene3D" id="1.10.10.250">
    <property type="entry name" value="Ribosomal protein L11, C-terminal domain"/>
    <property type="match status" value="1"/>
</dbReference>
<dbReference type="Gene3D" id="3.30.1550.10">
    <property type="entry name" value="Ribosomal protein L11/L12, N-terminal domain"/>
    <property type="match status" value="1"/>
</dbReference>
<dbReference type="HAMAP" id="MF_00736">
    <property type="entry name" value="Ribosomal_uL11"/>
    <property type="match status" value="1"/>
</dbReference>
<dbReference type="InterPro" id="IPR000911">
    <property type="entry name" value="Ribosomal_uL11"/>
</dbReference>
<dbReference type="InterPro" id="IPR006519">
    <property type="entry name" value="Ribosomal_uL11_bac-typ"/>
</dbReference>
<dbReference type="InterPro" id="IPR020783">
    <property type="entry name" value="Ribosomal_uL11_C"/>
</dbReference>
<dbReference type="InterPro" id="IPR036769">
    <property type="entry name" value="Ribosomal_uL11_C_sf"/>
</dbReference>
<dbReference type="InterPro" id="IPR020785">
    <property type="entry name" value="Ribosomal_uL11_CS"/>
</dbReference>
<dbReference type="InterPro" id="IPR020784">
    <property type="entry name" value="Ribosomal_uL11_N"/>
</dbReference>
<dbReference type="InterPro" id="IPR036796">
    <property type="entry name" value="Ribosomal_uL11_N_sf"/>
</dbReference>
<dbReference type="NCBIfam" id="TIGR01632">
    <property type="entry name" value="L11_bact"/>
    <property type="match status" value="1"/>
</dbReference>
<dbReference type="PANTHER" id="PTHR11661">
    <property type="entry name" value="60S RIBOSOMAL PROTEIN L12"/>
    <property type="match status" value="1"/>
</dbReference>
<dbReference type="PANTHER" id="PTHR11661:SF1">
    <property type="entry name" value="LARGE RIBOSOMAL SUBUNIT PROTEIN UL11M"/>
    <property type="match status" value="1"/>
</dbReference>
<dbReference type="Pfam" id="PF00298">
    <property type="entry name" value="Ribosomal_L11"/>
    <property type="match status" value="1"/>
</dbReference>
<dbReference type="Pfam" id="PF03946">
    <property type="entry name" value="Ribosomal_L11_N"/>
    <property type="match status" value="1"/>
</dbReference>
<dbReference type="SMART" id="SM00649">
    <property type="entry name" value="RL11"/>
    <property type="match status" value="1"/>
</dbReference>
<dbReference type="SUPFAM" id="SSF54747">
    <property type="entry name" value="Ribosomal L11/L12e N-terminal domain"/>
    <property type="match status" value="1"/>
</dbReference>
<dbReference type="SUPFAM" id="SSF46906">
    <property type="entry name" value="Ribosomal protein L11, C-terminal domain"/>
    <property type="match status" value="1"/>
</dbReference>
<dbReference type="PROSITE" id="PS00359">
    <property type="entry name" value="RIBOSOMAL_L11"/>
    <property type="match status" value="1"/>
</dbReference>
<proteinExistence type="inferred from homology"/>
<reference key="1">
    <citation type="journal article" date="2000" name="Nature">
        <title>The complete sequence of the mucosal pathogen Ureaplasma urealyticum.</title>
        <authorList>
            <person name="Glass J.I."/>
            <person name="Lefkowitz E.J."/>
            <person name="Glass J.S."/>
            <person name="Heiner C.R."/>
            <person name="Chen E.Y."/>
            <person name="Cassell G.H."/>
        </authorList>
    </citation>
    <scope>NUCLEOTIDE SEQUENCE [LARGE SCALE GENOMIC DNA]</scope>
    <source>
        <strain>ATCC 700970</strain>
    </source>
</reference>
<protein>
    <recommendedName>
        <fullName evidence="1">Large ribosomal subunit protein uL11</fullName>
    </recommendedName>
    <alternativeName>
        <fullName evidence="2">50S ribosomal protein L11</fullName>
    </alternativeName>
</protein>
<evidence type="ECO:0000255" key="1">
    <source>
        <dbReference type="HAMAP-Rule" id="MF_00736"/>
    </source>
</evidence>
<evidence type="ECO:0000305" key="2"/>
<sequence length="150" mass="16336">MAPKKKEVTRIAKLNLIGGQAKPGPALASVGINMAEFTKSFNDKTKDQNGKVIPVIITAYKDKSFDYVIKTTPVTFLLKDIAKIKSGAKDPKKQTVATISKEQALEIARYKLIDMTAYDEEAALRMIAGSAKQMGIVIEGVSAYKEKKGN</sequence>